<reference key="1">
    <citation type="journal article" date="2004" name="Proc. Natl. Acad. Sci. U.S.A.">
        <title>Structural flexibility in the Burkholderia mallei genome.</title>
        <authorList>
            <person name="Nierman W.C."/>
            <person name="DeShazer D."/>
            <person name="Kim H.S."/>
            <person name="Tettelin H."/>
            <person name="Nelson K.E."/>
            <person name="Feldblyum T.V."/>
            <person name="Ulrich R.L."/>
            <person name="Ronning C.M."/>
            <person name="Brinkac L.M."/>
            <person name="Daugherty S.C."/>
            <person name="Davidsen T.D."/>
            <person name="DeBoy R.T."/>
            <person name="Dimitrov G."/>
            <person name="Dodson R.J."/>
            <person name="Durkin A.S."/>
            <person name="Gwinn M.L."/>
            <person name="Haft D.H."/>
            <person name="Khouri H.M."/>
            <person name="Kolonay J.F."/>
            <person name="Madupu R."/>
            <person name="Mohammoud Y."/>
            <person name="Nelson W.C."/>
            <person name="Radune D."/>
            <person name="Romero C.M."/>
            <person name="Sarria S."/>
            <person name="Selengut J."/>
            <person name="Shamblin C."/>
            <person name="Sullivan S.A."/>
            <person name="White O."/>
            <person name="Yu Y."/>
            <person name="Zafar N."/>
            <person name="Zhou L."/>
            <person name="Fraser C.M."/>
        </authorList>
    </citation>
    <scope>NUCLEOTIDE SEQUENCE [LARGE SCALE GENOMIC DNA]</scope>
    <source>
        <strain>ATCC 23344</strain>
    </source>
</reference>
<organism>
    <name type="scientific">Burkholderia mallei (strain ATCC 23344)</name>
    <dbReference type="NCBI Taxonomy" id="243160"/>
    <lineage>
        <taxon>Bacteria</taxon>
        <taxon>Pseudomonadati</taxon>
        <taxon>Pseudomonadota</taxon>
        <taxon>Betaproteobacteria</taxon>
        <taxon>Burkholderiales</taxon>
        <taxon>Burkholderiaceae</taxon>
        <taxon>Burkholderia</taxon>
        <taxon>pseudomallei group</taxon>
    </lineage>
</organism>
<proteinExistence type="inferred from homology"/>
<evidence type="ECO:0000255" key="1">
    <source>
        <dbReference type="HAMAP-Rule" id="MF_01633"/>
    </source>
</evidence>
<accession>Q62MS6</accession>
<feature type="chain" id="PRO_0000246817" description="7-cyano-7-deazaguanine synthase">
    <location>
        <begin position="1"/>
        <end position="244"/>
    </location>
</feature>
<feature type="binding site" evidence="1">
    <location>
        <begin position="14"/>
        <end position="24"/>
    </location>
    <ligand>
        <name>ATP</name>
        <dbReference type="ChEBI" id="CHEBI:30616"/>
    </ligand>
</feature>
<feature type="binding site" evidence="1">
    <location>
        <position position="202"/>
    </location>
    <ligand>
        <name>Zn(2+)</name>
        <dbReference type="ChEBI" id="CHEBI:29105"/>
    </ligand>
</feature>
<feature type="binding site" evidence="1">
    <location>
        <position position="217"/>
    </location>
    <ligand>
        <name>Zn(2+)</name>
        <dbReference type="ChEBI" id="CHEBI:29105"/>
    </ligand>
</feature>
<feature type="binding site" evidence="1">
    <location>
        <position position="220"/>
    </location>
    <ligand>
        <name>Zn(2+)</name>
        <dbReference type="ChEBI" id="CHEBI:29105"/>
    </ligand>
</feature>
<feature type="binding site" evidence="1">
    <location>
        <position position="223"/>
    </location>
    <ligand>
        <name>Zn(2+)</name>
        <dbReference type="ChEBI" id="CHEBI:29105"/>
    </ligand>
</feature>
<gene>
    <name evidence="1" type="primary">queC</name>
    <name type="ordered locus">BMA0152</name>
</gene>
<comment type="function">
    <text evidence="1">Catalyzes the ATP-dependent conversion of 7-carboxy-7-deazaguanine (CDG) to 7-cyano-7-deazaguanine (preQ(0)).</text>
</comment>
<comment type="catalytic activity">
    <reaction evidence="1">
        <text>7-carboxy-7-deazaguanine + NH4(+) + ATP = 7-cyano-7-deazaguanine + ADP + phosphate + H2O + H(+)</text>
        <dbReference type="Rhea" id="RHEA:27982"/>
        <dbReference type="ChEBI" id="CHEBI:15377"/>
        <dbReference type="ChEBI" id="CHEBI:15378"/>
        <dbReference type="ChEBI" id="CHEBI:28938"/>
        <dbReference type="ChEBI" id="CHEBI:30616"/>
        <dbReference type="ChEBI" id="CHEBI:43474"/>
        <dbReference type="ChEBI" id="CHEBI:45075"/>
        <dbReference type="ChEBI" id="CHEBI:61036"/>
        <dbReference type="ChEBI" id="CHEBI:456216"/>
        <dbReference type="EC" id="6.3.4.20"/>
    </reaction>
</comment>
<comment type="cofactor">
    <cofactor evidence="1">
        <name>Zn(2+)</name>
        <dbReference type="ChEBI" id="CHEBI:29105"/>
    </cofactor>
    <text evidence="1">Binds 1 zinc ion per subunit.</text>
</comment>
<comment type="pathway">
    <text evidence="1">Purine metabolism; 7-cyano-7-deazaguanine biosynthesis.</text>
</comment>
<comment type="similarity">
    <text evidence="1">Belongs to the QueC family.</text>
</comment>
<sequence length="244" mass="27142">MIRTDAKDGALVLFSGGQDSATCVAWALERYQTVETLGFDYGQRHRVELECREGVRDALKRRFPQWSHKLGDDHLIDLSVLGSISDTAMTRAIEIETASNGLPNTFVPGRNLLFMTIAAAIAYRRGLRALVGGMCETDFSGYPDCRDDTMKALQVALNLGMDTRFVLETPLMWLDKADTWRLAEQLGGAPLVELIRVETHTCYVGERSELHDWGFGCGECPACKLRKRGYDAYLRGESVTEAPA</sequence>
<keyword id="KW-0067">ATP-binding</keyword>
<keyword id="KW-0436">Ligase</keyword>
<keyword id="KW-0479">Metal-binding</keyword>
<keyword id="KW-0547">Nucleotide-binding</keyword>
<keyword id="KW-0671">Queuosine biosynthesis</keyword>
<keyword id="KW-1185">Reference proteome</keyword>
<keyword id="KW-0862">Zinc</keyword>
<name>QUEC_BURMA</name>
<protein>
    <recommendedName>
        <fullName evidence="1">7-cyano-7-deazaguanine synthase</fullName>
        <ecNumber evidence="1">6.3.4.20</ecNumber>
    </recommendedName>
    <alternativeName>
        <fullName evidence="1">7-cyano-7-carbaguanine synthase</fullName>
    </alternativeName>
    <alternativeName>
        <fullName evidence="1">PreQ(0) synthase</fullName>
    </alternativeName>
    <alternativeName>
        <fullName evidence="1">Queuosine biosynthesis protein QueC</fullName>
    </alternativeName>
</protein>
<dbReference type="EC" id="6.3.4.20" evidence="1"/>
<dbReference type="EMBL" id="CP000010">
    <property type="protein sequence ID" value="AAU48974.1"/>
    <property type="molecule type" value="Genomic_DNA"/>
</dbReference>
<dbReference type="RefSeq" id="WP_004190026.1">
    <property type="nucleotide sequence ID" value="NC_006348.1"/>
</dbReference>
<dbReference type="RefSeq" id="YP_101991.1">
    <property type="nucleotide sequence ID" value="NC_006348.1"/>
</dbReference>
<dbReference type="SMR" id="Q62MS6"/>
<dbReference type="GeneID" id="93058685"/>
<dbReference type="KEGG" id="bma:BMA0152"/>
<dbReference type="PATRIC" id="fig|243160.12.peg.149"/>
<dbReference type="eggNOG" id="COG0603">
    <property type="taxonomic scope" value="Bacteria"/>
</dbReference>
<dbReference type="HOGENOM" id="CLU_081854_0_0_4"/>
<dbReference type="UniPathway" id="UPA00391"/>
<dbReference type="Proteomes" id="UP000006693">
    <property type="component" value="Chromosome 1"/>
</dbReference>
<dbReference type="GO" id="GO:0005524">
    <property type="term" value="F:ATP binding"/>
    <property type="evidence" value="ECO:0007669"/>
    <property type="project" value="UniProtKB-UniRule"/>
</dbReference>
<dbReference type="GO" id="GO:0016879">
    <property type="term" value="F:ligase activity, forming carbon-nitrogen bonds"/>
    <property type="evidence" value="ECO:0007669"/>
    <property type="project" value="UniProtKB-UniRule"/>
</dbReference>
<dbReference type="GO" id="GO:0008270">
    <property type="term" value="F:zinc ion binding"/>
    <property type="evidence" value="ECO:0007669"/>
    <property type="project" value="UniProtKB-UniRule"/>
</dbReference>
<dbReference type="GO" id="GO:0008616">
    <property type="term" value="P:queuosine biosynthetic process"/>
    <property type="evidence" value="ECO:0007669"/>
    <property type="project" value="UniProtKB-UniRule"/>
</dbReference>
<dbReference type="CDD" id="cd01995">
    <property type="entry name" value="QueC-like"/>
    <property type="match status" value="1"/>
</dbReference>
<dbReference type="Gene3D" id="3.40.50.620">
    <property type="entry name" value="HUPs"/>
    <property type="match status" value="1"/>
</dbReference>
<dbReference type="HAMAP" id="MF_01633">
    <property type="entry name" value="QueC"/>
    <property type="match status" value="1"/>
</dbReference>
<dbReference type="InterPro" id="IPR018317">
    <property type="entry name" value="QueC"/>
</dbReference>
<dbReference type="InterPro" id="IPR014729">
    <property type="entry name" value="Rossmann-like_a/b/a_fold"/>
</dbReference>
<dbReference type="NCBIfam" id="TIGR00364">
    <property type="entry name" value="7-cyano-7-deazaguanine synthase QueC"/>
    <property type="match status" value="1"/>
</dbReference>
<dbReference type="PANTHER" id="PTHR42914">
    <property type="entry name" value="7-CYANO-7-DEAZAGUANINE SYNTHASE"/>
    <property type="match status" value="1"/>
</dbReference>
<dbReference type="PANTHER" id="PTHR42914:SF1">
    <property type="entry name" value="7-CYANO-7-DEAZAGUANINE SYNTHASE"/>
    <property type="match status" value="1"/>
</dbReference>
<dbReference type="Pfam" id="PF06508">
    <property type="entry name" value="QueC"/>
    <property type="match status" value="1"/>
</dbReference>
<dbReference type="PIRSF" id="PIRSF006293">
    <property type="entry name" value="ExsB"/>
    <property type="match status" value="1"/>
</dbReference>
<dbReference type="SUPFAM" id="SSF52402">
    <property type="entry name" value="Adenine nucleotide alpha hydrolases-like"/>
    <property type="match status" value="1"/>
</dbReference>